<organism>
    <name type="scientific">Streptococcus pyogenes serotype M28 (strain MGAS6180)</name>
    <dbReference type="NCBI Taxonomy" id="319701"/>
    <lineage>
        <taxon>Bacteria</taxon>
        <taxon>Bacillati</taxon>
        <taxon>Bacillota</taxon>
        <taxon>Bacilli</taxon>
        <taxon>Lactobacillales</taxon>
        <taxon>Streptococcaceae</taxon>
        <taxon>Streptococcus</taxon>
    </lineage>
</organism>
<comment type="function">
    <text evidence="1">Converts the preformed base xanthine, a product of nucleic acid breakdown, to xanthosine 5'-monophosphate (XMP), so it can be reused for RNA or DNA synthesis.</text>
</comment>
<comment type="catalytic activity">
    <reaction evidence="1">
        <text>XMP + diphosphate = xanthine + 5-phospho-alpha-D-ribose 1-diphosphate</text>
        <dbReference type="Rhea" id="RHEA:10800"/>
        <dbReference type="ChEBI" id="CHEBI:17712"/>
        <dbReference type="ChEBI" id="CHEBI:33019"/>
        <dbReference type="ChEBI" id="CHEBI:57464"/>
        <dbReference type="ChEBI" id="CHEBI:58017"/>
        <dbReference type="EC" id="2.4.2.22"/>
    </reaction>
</comment>
<comment type="pathway">
    <text evidence="1">Purine metabolism; XMP biosynthesis via salvage pathway; XMP from xanthine: step 1/1.</text>
</comment>
<comment type="subunit">
    <text evidence="1">Homodimer.</text>
</comment>
<comment type="subcellular location">
    <subcellularLocation>
        <location evidence="1">Cytoplasm</location>
    </subcellularLocation>
</comment>
<comment type="similarity">
    <text evidence="1">Belongs to the purine/pyrimidine phosphoribosyltransferase family. Xpt subfamily.</text>
</comment>
<gene>
    <name evidence="1" type="primary">xpt</name>
    <name type="ordered locus">M28_Spy0832</name>
</gene>
<protein>
    <recommendedName>
        <fullName evidence="1">Xanthine phosphoribosyltransferase</fullName>
        <shortName evidence="1">XPRTase</shortName>
        <ecNumber evidence="1">2.4.2.22</ecNumber>
    </recommendedName>
</protein>
<accession>Q48TL5</accession>
<name>XPT_STRPM</name>
<proteinExistence type="inferred from homology"/>
<dbReference type="EC" id="2.4.2.22" evidence="1"/>
<dbReference type="EMBL" id="CP000056">
    <property type="protein sequence ID" value="AAX71945.1"/>
    <property type="molecule type" value="Genomic_DNA"/>
</dbReference>
<dbReference type="RefSeq" id="WP_002984677.1">
    <property type="nucleotide sequence ID" value="NC_007296.2"/>
</dbReference>
<dbReference type="SMR" id="Q48TL5"/>
<dbReference type="KEGG" id="spb:M28_Spy0832"/>
<dbReference type="HOGENOM" id="CLU_099015_0_0_9"/>
<dbReference type="UniPathway" id="UPA00602">
    <property type="reaction ID" value="UER00658"/>
</dbReference>
<dbReference type="GO" id="GO:0005737">
    <property type="term" value="C:cytoplasm"/>
    <property type="evidence" value="ECO:0007669"/>
    <property type="project" value="UniProtKB-SubCell"/>
</dbReference>
<dbReference type="GO" id="GO:0000310">
    <property type="term" value="F:xanthine phosphoribosyltransferase activity"/>
    <property type="evidence" value="ECO:0007669"/>
    <property type="project" value="UniProtKB-UniRule"/>
</dbReference>
<dbReference type="GO" id="GO:0006166">
    <property type="term" value="P:purine ribonucleoside salvage"/>
    <property type="evidence" value="ECO:0007669"/>
    <property type="project" value="UniProtKB-KW"/>
</dbReference>
<dbReference type="GO" id="GO:0046110">
    <property type="term" value="P:xanthine metabolic process"/>
    <property type="evidence" value="ECO:0007669"/>
    <property type="project" value="InterPro"/>
</dbReference>
<dbReference type="GO" id="GO:0032265">
    <property type="term" value="P:XMP salvage"/>
    <property type="evidence" value="ECO:0007669"/>
    <property type="project" value="UniProtKB-UniRule"/>
</dbReference>
<dbReference type="CDD" id="cd06223">
    <property type="entry name" value="PRTases_typeI"/>
    <property type="match status" value="1"/>
</dbReference>
<dbReference type="Gene3D" id="3.40.50.2020">
    <property type="match status" value="1"/>
</dbReference>
<dbReference type="HAMAP" id="MF_01184">
    <property type="entry name" value="XPRTase"/>
    <property type="match status" value="1"/>
</dbReference>
<dbReference type="InterPro" id="IPR000836">
    <property type="entry name" value="PRibTrfase_dom"/>
</dbReference>
<dbReference type="InterPro" id="IPR029057">
    <property type="entry name" value="PRTase-like"/>
</dbReference>
<dbReference type="InterPro" id="IPR050118">
    <property type="entry name" value="Pur/Pyrimidine_PRTase"/>
</dbReference>
<dbReference type="InterPro" id="IPR010079">
    <property type="entry name" value="Xanthine_PRibTrfase"/>
</dbReference>
<dbReference type="NCBIfam" id="NF006671">
    <property type="entry name" value="PRK09219.1"/>
    <property type="match status" value="1"/>
</dbReference>
<dbReference type="NCBIfam" id="TIGR01744">
    <property type="entry name" value="XPRTase"/>
    <property type="match status" value="1"/>
</dbReference>
<dbReference type="PANTHER" id="PTHR43864">
    <property type="entry name" value="HYPOXANTHINE/GUANINE PHOSPHORIBOSYLTRANSFERASE"/>
    <property type="match status" value="1"/>
</dbReference>
<dbReference type="PANTHER" id="PTHR43864:SF1">
    <property type="entry name" value="XANTHINE PHOSPHORIBOSYLTRANSFERASE"/>
    <property type="match status" value="1"/>
</dbReference>
<dbReference type="Pfam" id="PF00156">
    <property type="entry name" value="Pribosyltran"/>
    <property type="match status" value="1"/>
</dbReference>
<dbReference type="SUPFAM" id="SSF53271">
    <property type="entry name" value="PRTase-like"/>
    <property type="match status" value="1"/>
</dbReference>
<evidence type="ECO:0000255" key="1">
    <source>
        <dbReference type="HAMAP-Rule" id="MF_01184"/>
    </source>
</evidence>
<feature type="chain" id="PRO_0000339771" description="Xanthine phosphoribosyltransferase">
    <location>
        <begin position="1"/>
        <end position="193"/>
    </location>
</feature>
<feature type="binding site" evidence="1">
    <location>
        <position position="20"/>
    </location>
    <ligand>
        <name>xanthine</name>
        <dbReference type="ChEBI" id="CHEBI:17712"/>
    </ligand>
</feature>
<feature type="binding site" evidence="1">
    <location>
        <position position="27"/>
    </location>
    <ligand>
        <name>xanthine</name>
        <dbReference type="ChEBI" id="CHEBI:17712"/>
    </ligand>
</feature>
<feature type="binding site" evidence="1">
    <location>
        <begin position="128"/>
        <end position="132"/>
    </location>
    <ligand>
        <name>5-phospho-alpha-D-ribose 1-diphosphate</name>
        <dbReference type="ChEBI" id="CHEBI:58017"/>
    </ligand>
</feature>
<feature type="binding site" evidence="1">
    <location>
        <position position="156"/>
    </location>
    <ligand>
        <name>xanthine</name>
        <dbReference type="ChEBI" id="CHEBI:17712"/>
    </ligand>
</feature>
<keyword id="KW-0963">Cytoplasm</keyword>
<keyword id="KW-0328">Glycosyltransferase</keyword>
<keyword id="KW-0660">Purine salvage</keyword>
<keyword id="KW-0808">Transferase</keyword>
<sequence>MQLLEERILTDGNILGENILKVDNFLTHQVDYRLMKAIGKVFAQKYAEAGITKVVTIEASGIAPAVYAAEAMDVPMIFAKKHKNITMTEGILTAEVYSFTKQVTSTVSIAGKFLSKEDKVLIIDDFLANGQAAKGLIEIIGQAGAQVVGVGIVIEKSFQDGRRLIEDMGIEVTSLARIKNFENGNLNFLEADA</sequence>
<reference key="1">
    <citation type="journal article" date="2005" name="J. Infect. Dis.">
        <title>Genome sequence of a serotype M28 strain of group A Streptococcus: potential new insights into puerperal sepsis and bacterial disease specificity.</title>
        <authorList>
            <person name="Green N.M."/>
            <person name="Zhang S."/>
            <person name="Porcella S.F."/>
            <person name="Nagiec M.J."/>
            <person name="Barbian K.D."/>
            <person name="Beres S.B."/>
            <person name="Lefebvre R.B."/>
            <person name="Musser J.M."/>
        </authorList>
    </citation>
    <scope>NUCLEOTIDE SEQUENCE [LARGE SCALE GENOMIC DNA]</scope>
    <source>
        <strain>MGAS6180</strain>
    </source>
</reference>